<protein>
    <recommendedName>
        <fullName evidence="1">DNA mismatch repair protein MutH</fullName>
    </recommendedName>
    <alternativeName>
        <fullName evidence="1">Methyl-directed mismatch repair protein</fullName>
    </alternativeName>
</protein>
<keyword id="KW-0963">Cytoplasm</keyword>
<keyword id="KW-0227">DNA damage</keyword>
<keyword id="KW-0234">DNA repair</keyword>
<keyword id="KW-0255">Endonuclease</keyword>
<keyword id="KW-0378">Hydrolase</keyword>
<keyword id="KW-0540">Nuclease</keyword>
<proteinExistence type="inferred from homology"/>
<gene>
    <name evidence="1" type="primary">mutH</name>
    <name type="ordered locus">Sbal195_1260</name>
</gene>
<feature type="chain" id="PRO_1000083522" description="DNA mismatch repair protein MutH">
    <location>
        <begin position="1"/>
        <end position="223"/>
    </location>
</feature>
<organism>
    <name type="scientific">Shewanella baltica (strain OS195)</name>
    <dbReference type="NCBI Taxonomy" id="399599"/>
    <lineage>
        <taxon>Bacteria</taxon>
        <taxon>Pseudomonadati</taxon>
        <taxon>Pseudomonadota</taxon>
        <taxon>Gammaproteobacteria</taxon>
        <taxon>Alteromonadales</taxon>
        <taxon>Shewanellaceae</taxon>
        <taxon>Shewanella</taxon>
    </lineage>
</organism>
<reference key="1">
    <citation type="submission" date="2007-11" db="EMBL/GenBank/DDBJ databases">
        <title>Complete sequence of chromosome of Shewanella baltica OS195.</title>
        <authorList>
            <consortium name="US DOE Joint Genome Institute"/>
            <person name="Copeland A."/>
            <person name="Lucas S."/>
            <person name="Lapidus A."/>
            <person name="Barry K."/>
            <person name="Glavina del Rio T."/>
            <person name="Dalin E."/>
            <person name="Tice H."/>
            <person name="Pitluck S."/>
            <person name="Chain P."/>
            <person name="Malfatti S."/>
            <person name="Shin M."/>
            <person name="Vergez L."/>
            <person name="Schmutz J."/>
            <person name="Larimer F."/>
            <person name="Land M."/>
            <person name="Hauser L."/>
            <person name="Kyrpides N."/>
            <person name="Kim E."/>
            <person name="Brettar I."/>
            <person name="Rodrigues J."/>
            <person name="Konstantinidis K."/>
            <person name="Klappenbach J."/>
            <person name="Hofle M."/>
            <person name="Tiedje J."/>
            <person name="Richardson P."/>
        </authorList>
    </citation>
    <scope>NUCLEOTIDE SEQUENCE [LARGE SCALE GENOMIC DNA]</scope>
    <source>
        <strain>OS195</strain>
    </source>
</reference>
<name>MUTH_SHEB9</name>
<sequence>MNRIIPPENLPELLERAHMMAGVSLAQIAAQRGLNVPKDLKRDKGWVGQLIEMELGATAGSKPEQDFLHLGVELKTIPIDSQGRPLETTYVCVAPLSNIQGLTWQNSLVCHKLQRVLWVPVEGERHIPVGERRIGTPILWEPDPQELQLLQQDWEEIMELIALGKVEKLTARHGEVLQLRPKAANSKALTQSIAEDGSLKMTNPRGFYLKTSFTAMILNKVFG</sequence>
<dbReference type="EMBL" id="CP000891">
    <property type="protein sequence ID" value="ABX48435.1"/>
    <property type="molecule type" value="Genomic_DNA"/>
</dbReference>
<dbReference type="RefSeq" id="WP_006085058.1">
    <property type="nucleotide sequence ID" value="NC_009997.1"/>
</dbReference>
<dbReference type="SMR" id="A9L5L8"/>
<dbReference type="GeneID" id="11771530"/>
<dbReference type="KEGG" id="sbn:Sbal195_1260"/>
<dbReference type="HOGENOM" id="CLU_086669_0_0_6"/>
<dbReference type="Proteomes" id="UP000000770">
    <property type="component" value="Chromosome"/>
</dbReference>
<dbReference type="GO" id="GO:0005737">
    <property type="term" value="C:cytoplasm"/>
    <property type="evidence" value="ECO:0007669"/>
    <property type="project" value="UniProtKB-SubCell"/>
</dbReference>
<dbReference type="GO" id="GO:0003677">
    <property type="term" value="F:DNA binding"/>
    <property type="evidence" value="ECO:0007669"/>
    <property type="project" value="InterPro"/>
</dbReference>
<dbReference type="GO" id="GO:0004519">
    <property type="term" value="F:endonuclease activity"/>
    <property type="evidence" value="ECO:0007669"/>
    <property type="project" value="UniProtKB-UniRule"/>
</dbReference>
<dbReference type="GO" id="GO:0006304">
    <property type="term" value="P:DNA modification"/>
    <property type="evidence" value="ECO:0007669"/>
    <property type="project" value="InterPro"/>
</dbReference>
<dbReference type="GO" id="GO:0006298">
    <property type="term" value="P:mismatch repair"/>
    <property type="evidence" value="ECO:0007669"/>
    <property type="project" value="UniProtKB-UniRule"/>
</dbReference>
<dbReference type="CDD" id="cd00583">
    <property type="entry name" value="MutH-like"/>
    <property type="match status" value="1"/>
</dbReference>
<dbReference type="Gene3D" id="3.40.600.10">
    <property type="entry name" value="DNA mismatch repair MutH/Restriction endonuclease, type II"/>
    <property type="match status" value="1"/>
</dbReference>
<dbReference type="HAMAP" id="MF_00759">
    <property type="entry name" value="MutH"/>
    <property type="match status" value="1"/>
</dbReference>
<dbReference type="InterPro" id="IPR004230">
    <property type="entry name" value="DNA_mismatch_repair_MutH"/>
</dbReference>
<dbReference type="InterPro" id="IPR011337">
    <property type="entry name" value="DNA_rep_MutH/RE_typeII_Sau3AI"/>
</dbReference>
<dbReference type="InterPro" id="IPR037057">
    <property type="entry name" value="DNA_rep_MutH/T2_RE_sf"/>
</dbReference>
<dbReference type="InterPro" id="IPR011335">
    <property type="entry name" value="Restrct_endonuc-II-like"/>
</dbReference>
<dbReference type="NCBIfam" id="TIGR02248">
    <property type="entry name" value="mutH_TIGR"/>
    <property type="match status" value="1"/>
</dbReference>
<dbReference type="NCBIfam" id="NF003458">
    <property type="entry name" value="PRK05070.1"/>
    <property type="match status" value="1"/>
</dbReference>
<dbReference type="Pfam" id="PF02976">
    <property type="entry name" value="MutH"/>
    <property type="match status" value="1"/>
</dbReference>
<dbReference type="SMART" id="SM00927">
    <property type="entry name" value="MutH"/>
    <property type="match status" value="1"/>
</dbReference>
<dbReference type="SUPFAM" id="SSF52980">
    <property type="entry name" value="Restriction endonuclease-like"/>
    <property type="match status" value="1"/>
</dbReference>
<accession>A9L5L8</accession>
<comment type="function">
    <text evidence="1">Sequence-specific endonuclease that cleaves unmethylated GATC sequences. It is involved in DNA mismatch repair.</text>
</comment>
<comment type="subcellular location">
    <subcellularLocation>
        <location evidence="1">Cytoplasm</location>
    </subcellularLocation>
</comment>
<comment type="similarity">
    <text evidence="1">Belongs to the MutH family.</text>
</comment>
<evidence type="ECO:0000255" key="1">
    <source>
        <dbReference type="HAMAP-Rule" id="MF_00759"/>
    </source>
</evidence>